<gene>
    <name evidence="1" type="primary">panB</name>
    <name type="ordered locus">PST_3296</name>
</gene>
<reference key="1">
    <citation type="journal article" date="2008" name="Proc. Natl. Acad. Sci. U.S.A.">
        <title>Nitrogen fixation island and rhizosphere competence traits in the genome of root-associated Pseudomonas stutzeri A1501.</title>
        <authorList>
            <person name="Yan Y."/>
            <person name="Yang J."/>
            <person name="Dou Y."/>
            <person name="Chen M."/>
            <person name="Ping S."/>
            <person name="Peng J."/>
            <person name="Lu W."/>
            <person name="Zhang W."/>
            <person name="Yao Z."/>
            <person name="Li H."/>
            <person name="Liu W."/>
            <person name="He S."/>
            <person name="Geng L."/>
            <person name="Zhang X."/>
            <person name="Yang F."/>
            <person name="Yu H."/>
            <person name="Zhan Y."/>
            <person name="Li D."/>
            <person name="Lin Z."/>
            <person name="Wang Y."/>
            <person name="Elmerich C."/>
            <person name="Lin M."/>
            <person name="Jin Q."/>
        </authorList>
    </citation>
    <scope>NUCLEOTIDE SEQUENCE [LARGE SCALE GENOMIC DNA]</scope>
    <source>
        <strain>A1501</strain>
    </source>
</reference>
<dbReference type="EC" id="2.1.2.11" evidence="1"/>
<dbReference type="EMBL" id="CP000304">
    <property type="protein sequence ID" value="ABP80927.1"/>
    <property type="status" value="ALT_INIT"/>
    <property type="molecule type" value="Genomic_DNA"/>
</dbReference>
<dbReference type="RefSeq" id="WP_013983864.1">
    <property type="nucleotide sequence ID" value="NC_009434.1"/>
</dbReference>
<dbReference type="SMR" id="A4VPM6"/>
<dbReference type="GeneID" id="66822693"/>
<dbReference type="KEGG" id="psa:PST_3296"/>
<dbReference type="eggNOG" id="COG0413">
    <property type="taxonomic scope" value="Bacteria"/>
</dbReference>
<dbReference type="HOGENOM" id="CLU_036645_1_0_6"/>
<dbReference type="UniPathway" id="UPA00028">
    <property type="reaction ID" value="UER00003"/>
</dbReference>
<dbReference type="Proteomes" id="UP000000233">
    <property type="component" value="Chromosome"/>
</dbReference>
<dbReference type="GO" id="GO:0005737">
    <property type="term" value="C:cytoplasm"/>
    <property type="evidence" value="ECO:0007669"/>
    <property type="project" value="UniProtKB-SubCell"/>
</dbReference>
<dbReference type="GO" id="GO:0003864">
    <property type="term" value="F:3-methyl-2-oxobutanoate hydroxymethyltransferase activity"/>
    <property type="evidence" value="ECO:0007669"/>
    <property type="project" value="UniProtKB-UniRule"/>
</dbReference>
<dbReference type="GO" id="GO:0000287">
    <property type="term" value="F:magnesium ion binding"/>
    <property type="evidence" value="ECO:0007669"/>
    <property type="project" value="TreeGrafter"/>
</dbReference>
<dbReference type="GO" id="GO:0015940">
    <property type="term" value="P:pantothenate biosynthetic process"/>
    <property type="evidence" value="ECO:0007669"/>
    <property type="project" value="UniProtKB-UniRule"/>
</dbReference>
<dbReference type="CDD" id="cd06557">
    <property type="entry name" value="KPHMT-like"/>
    <property type="match status" value="1"/>
</dbReference>
<dbReference type="FunFam" id="3.20.20.60:FF:000003">
    <property type="entry name" value="3-methyl-2-oxobutanoate hydroxymethyltransferase"/>
    <property type="match status" value="1"/>
</dbReference>
<dbReference type="Gene3D" id="3.20.20.60">
    <property type="entry name" value="Phosphoenolpyruvate-binding domains"/>
    <property type="match status" value="1"/>
</dbReference>
<dbReference type="HAMAP" id="MF_00156">
    <property type="entry name" value="PanB"/>
    <property type="match status" value="1"/>
</dbReference>
<dbReference type="InterPro" id="IPR003700">
    <property type="entry name" value="Pantoate_hydroxy_MeTrfase"/>
</dbReference>
<dbReference type="InterPro" id="IPR015813">
    <property type="entry name" value="Pyrv/PenolPyrv_kinase-like_dom"/>
</dbReference>
<dbReference type="InterPro" id="IPR040442">
    <property type="entry name" value="Pyrv_kinase-like_dom_sf"/>
</dbReference>
<dbReference type="NCBIfam" id="TIGR00222">
    <property type="entry name" value="panB"/>
    <property type="match status" value="1"/>
</dbReference>
<dbReference type="NCBIfam" id="NF001452">
    <property type="entry name" value="PRK00311.1"/>
    <property type="match status" value="1"/>
</dbReference>
<dbReference type="PANTHER" id="PTHR20881">
    <property type="entry name" value="3-METHYL-2-OXOBUTANOATE HYDROXYMETHYLTRANSFERASE"/>
    <property type="match status" value="1"/>
</dbReference>
<dbReference type="PANTHER" id="PTHR20881:SF0">
    <property type="entry name" value="3-METHYL-2-OXOBUTANOATE HYDROXYMETHYLTRANSFERASE"/>
    <property type="match status" value="1"/>
</dbReference>
<dbReference type="Pfam" id="PF02548">
    <property type="entry name" value="Pantoate_transf"/>
    <property type="match status" value="1"/>
</dbReference>
<dbReference type="PIRSF" id="PIRSF000388">
    <property type="entry name" value="Pantoate_hydroxy_MeTrfase"/>
    <property type="match status" value="1"/>
</dbReference>
<dbReference type="SUPFAM" id="SSF51621">
    <property type="entry name" value="Phosphoenolpyruvate/pyruvate domain"/>
    <property type="match status" value="1"/>
</dbReference>
<organism>
    <name type="scientific">Stutzerimonas stutzeri (strain A1501)</name>
    <name type="common">Pseudomonas stutzeri</name>
    <dbReference type="NCBI Taxonomy" id="379731"/>
    <lineage>
        <taxon>Bacteria</taxon>
        <taxon>Pseudomonadati</taxon>
        <taxon>Pseudomonadota</taxon>
        <taxon>Gammaproteobacteria</taxon>
        <taxon>Pseudomonadales</taxon>
        <taxon>Pseudomonadaceae</taxon>
        <taxon>Stutzerimonas</taxon>
    </lineage>
</organism>
<accession>A4VPM6</accession>
<proteinExistence type="inferred from homology"/>
<evidence type="ECO:0000255" key="1">
    <source>
        <dbReference type="HAMAP-Rule" id="MF_00156"/>
    </source>
</evidence>
<evidence type="ECO:0000305" key="2"/>
<keyword id="KW-0963">Cytoplasm</keyword>
<keyword id="KW-0460">Magnesium</keyword>
<keyword id="KW-0479">Metal-binding</keyword>
<keyword id="KW-0566">Pantothenate biosynthesis</keyword>
<keyword id="KW-1185">Reference proteome</keyword>
<keyword id="KW-0808">Transferase</keyword>
<feature type="chain" id="PRO_0000297340" description="3-methyl-2-oxobutanoate hydroxymethyltransferase">
    <location>
        <begin position="1"/>
        <end position="266"/>
    </location>
</feature>
<feature type="active site" description="Proton acceptor" evidence="1">
    <location>
        <position position="181"/>
    </location>
</feature>
<feature type="binding site" evidence="1">
    <location>
        <begin position="45"/>
        <end position="46"/>
    </location>
    <ligand>
        <name>3-methyl-2-oxobutanoate</name>
        <dbReference type="ChEBI" id="CHEBI:11851"/>
    </ligand>
</feature>
<feature type="binding site" evidence="1">
    <location>
        <position position="45"/>
    </location>
    <ligand>
        <name>Mg(2+)</name>
        <dbReference type="ChEBI" id="CHEBI:18420"/>
    </ligand>
</feature>
<feature type="binding site" evidence="1">
    <location>
        <position position="84"/>
    </location>
    <ligand>
        <name>3-methyl-2-oxobutanoate</name>
        <dbReference type="ChEBI" id="CHEBI:11851"/>
    </ligand>
</feature>
<feature type="binding site" evidence="1">
    <location>
        <position position="84"/>
    </location>
    <ligand>
        <name>Mg(2+)</name>
        <dbReference type="ChEBI" id="CHEBI:18420"/>
    </ligand>
</feature>
<feature type="binding site" evidence="1">
    <location>
        <position position="112"/>
    </location>
    <ligand>
        <name>3-methyl-2-oxobutanoate</name>
        <dbReference type="ChEBI" id="CHEBI:11851"/>
    </ligand>
</feature>
<feature type="binding site" evidence="1">
    <location>
        <position position="114"/>
    </location>
    <ligand>
        <name>Mg(2+)</name>
        <dbReference type="ChEBI" id="CHEBI:18420"/>
    </ligand>
</feature>
<name>PANB_STUS1</name>
<sequence length="266" mass="28075">MPDVTLTTLQGLKQKGEKIVMLTCYDATFAKTACDAGVEMLLIGDSLGMVLQGHDSTLPVTVADMAYHTASVKRGNRGAMIVADLPFMANATTEQTLNNSALLMQAGAHMIKLEGTAWLAESIRLLADRGIPVCAHMGLTPQAVNLFGGYKVQGREEAQAQQMLEDAKSLEAAGAAMLLLECVPSELAARITRAVQIPVIGIGAGSDTDGQVLVLHDMLGLSLSGRVPKFVKNFMREHGDIPAAIAGYVKAVKAVEFPAAEHGFSA</sequence>
<comment type="function">
    <text evidence="1">Catalyzes the reversible reaction in which hydroxymethyl group from 5,10-methylenetetrahydrofolate is transferred onto alpha-ketoisovalerate to form ketopantoate.</text>
</comment>
<comment type="catalytic activity">
    <reaction evidence="1">
        <text>3-methyl-2-oxobutanoate + (6R)-5,10-methylene-5,6,7,8-tetrahydrofolate + H2O = 2-dehydropantoate + (6S)-5,6,7,8-tetrahydrofolate</text>
        <dbReference type="Rhea" id="RHEA:11824"/>
        <dbReference type="ChEBI" id="CHEBI:11561"/>
        <dbReference type="ChEBI" id="CHEBI:11851"/>
        <dbReference type="ChEBI" id="CHEBI:15377"/>
        <dbReference type="ChEBI" id="CHEBI:15636"/>
        <dbReference type="ChEBI" id="CHEBI:57453"/>
        <dbReference type="EC" id="2.1.2.11"/>
    </reaction>
</comment>
<comment type="cofactor">
    <cofactor evidence="1">
        <name>Mg(2+)</name>
        <dbReference type="ChEBI" id="CHEBI:18420"/>
    </cofactor>
    <text evidence="1">Binds 1 Mg(2+) ion per subunit.</text>
</comment>
<comment type="pathway">
    <text evidence="1">Cofactor biosynthesis; (R)-pantothenate biosynthesis; (R)-pantoate from 3-methyl-2-oxobutanoate: step 1/2.</text>
</comment>
<comment type="subunit">
    <text evidence="1">Homodecamer; pentamer of dimers.</text>
</comment>
<comment type="subcellular location">
    <subcellularLocation>
        <location evidence="1">Cytoplasm</location>
    </subcellularLocation>
</comment>
<comment type="similarity">
    <text evidence="1">Belongs to the PanB family.</text>
</comment>
<comment type="sequence caution" evidence="2">
    <conflict type="erroneous initiation">
        <sequence resource="EMBL-CDS" id="ABP80927"/>
    </conflict>
</comment>
<protein>
    <recommendedName>
        <fullName evidence="1">3-methyl-2-oxobutanoate hydroxymethyltransferase</fullName>
        <ecNumber evidence="1">2.1.2.11</ecNumber>
    </recommendedName>
    <alternativeName>
        <fullName evidence="1">Ketopantoate hydroxymethyltransferase</fullName>
        <shortName evidence="1">KPHMT</shortName>
    </alternativeName>
</protein>